<dbReference type="EC" id="6.3.4.13" evidence="2"/>
<dbReference type="EMBL" id="CP001398">
    <property type="protein sequence ID" value="ACS33252.1"/>
    <property type="molecule type" value="Genomic_DNA"/>
</dbReference>
<dbReference type="RefSeq" id="WP_015858370.1">
    <property type="nucleotide sequence ID" value="NC_012804.1"/>
</dbReference>
<dbReference type="SMR" id="C5A4U0"/>
<dbReference type="STRING" id="593117.TGAM_0750"/>
<dbReference type="PaxDb" id="593117-TGAM_0750"/>
<dbReference type="GeneID" id="7987724"/>
<dbReference type="KEGG" id="tga:TGAM_0750"/>
<dbReference type="PATRIC" id="fig|593117.10.peg.749"/>
<dbReference type="eggNOG" id="arCOG04415">
    <property type="taxonomic scope" value="Archaea"/>
</dbReference>
<dbReference type="HOGENOM" id="CLU_027420_3_0_2"/>
<dbReference type="OrthoDB" id="146558at2157"/>
<dbReference type="UniPathway" id="UPA00074">
    <property type="reaction ID" value="UER00125"/>
</dbReference>
<dbReference type="Proteomes" id="UP000001488">
    <property type="component" value="Chromosome"/>
</dbReference>
<dbReference type="GO" id="GO:0005524">
    <property type="term" value="F:ATP binding"/>
    <property type="evidence" value="ECO:0007669"/>
    <property type="project" value="UniProtKB-KW"/>
</dbReference>
<dbReference type="GO" id="GO:0046872">
    <property type="term" value="F:metal ion binding"/>
    <property type="evidence" value="ECO:0007669"/>
    <property type="project" value="UniProtKB-KW"/>
</dbReference>
<dbReference type="GO" id="GO:0004637">
    <property type="term" value="F:phosphoribosylamine-glycine ligase activity"/>
    <property type="evidence" value="ECO:0007669"/>
    <property type="project" value="UniProtKB-UniRule"/>
</dbReference>
<dbReference type="GO" id="GO:0006189">
    <property type="term" value="P:'de novo' IMP biosynthetic process"/>
    <property type="evidence" value="ECO:0007669"/>
    <property type="project" value="UniProtKB-UniRule"/>
</dbReference>
<dbReference type="GO" id="GO:0009113">
    <property type="term" value="P:purine nucleobase biosynthetic process"/>
    <property type="evidence" value="ECO:0007669"/>
    <property type="project" value="InterPro"/>
</dbReference>
<dbReference type="Gene3D" id="3.40.50.20">
    <property type="match status" value="1"/>
</dbReference>
<dbReference type="Gene3D" id="3.30.1490.20">
    <property type="entry name" value="ATP-grasp fold, A domain"/>
    <property type="match status" value="1"/>
</dbReference>
<dbReference type="Gene3D" id="3.30.470.20">
    <property type="entry name" value="ATP-grasp fold, B domain"/>
    <property type="match status" value="1"/>
</dbReference>
<dbReference type="Gene3D" id="3.90.600.10">
    <property type="entry name" value="Phosphoribosylglycinamide synthetase, C-terminal domain"/>
    <property type="match status" value="1"/>
</dbReference>
<dbReference type="HAMAP" id="MF_00138">
    <property type="entry name" value="GARS"/>
    <property type="match status" value="1"/>
</dbReference>
<dbReference type="InterPro" id="IPR011761">
    <property type="entry name" value="ATP-grasp"/>
</dbReference>
<dbReference type="InterPro" id="IPR013815">
    <property type="entry name" value="ATP_grasp_subdomain_1"/>
</dbReference>
<dbReference type="InterPro" id="IPR016185">
    <property type="entry name" value="PreATP-grasp_dom_sf"/>
</dbReference>
<dbReference type="InterPro" id="IPR020561">
    <property type="entry name" value="PRibGlycinamid_synth_ATP-grasp"/>
</dbReference>
<dbReference type="InterPro" id="IPR000115">
    <property type="entry name" value="PRibGlycinamide_synth"/>
</dbReference>
<dbReference type="InterPro" id="IPR020560">
    <property type="entry name" value="PRibGlycinamide_synth_C-dom"/>
</dbReference>
<dbReference type="InterPro" id="IPR037123">
    <property type="entry name" value="PRibGlycinamide_synth_C_sf"/>
</dbReference>
<dbReference type="InterPro" id="IPR020559">
    <property type="entry name" value="PRibGlycinamide_synth_CS"/>
</dbReference>
<dbReference type="InterPro" id="IPR020562">
    <property type="entry name" value="PRibGlycinamide_synth_N"/>
</dbReference>
<dbReference type="InterPro" id="IPR011054">
    <property type="entry name" value="Rudment_hybrid_motif"/>
</dbReference>
<dbReference type="NCBIfam" id="TIGR00877">
    <property type="entry name" value="purD"/>
    <property type="match status" value="1"/>
</dbReference>
<dbReference type="PANTHER" id="PTHR43472">
    <property type="entry name" value="PHOSPHORIBOSYLAMINE--GLYCINE LIGASE"/>
    <property type="match status" value="1"/>
</dbReference>
<dbReference type="PANTHER" id="PTHR43472:SF1">
    <property type="entry name" value="PHOSPHORIBOSYLAMINE--GLYCINE LIGASE, CHLOROPLASTIC"/>
    <property type="match status" value="1"/>
</dbReference>
<dbReference type="Pfam" id="PF01071">
    <property type="entry name" value="GARS_A"/>
    <property type="match status" value="1"/>
</dbReference>
<dbReference type="Pfam" id="PF02843">
    <property type="entry name" value="GARS_C"/>
    <property type="match status" value="1"/>
</dbReference>
<dbReference type="Pfam" id="PF02844">
    <property type="entry name" value="GARS_N"/>
    <property type="match status" value="1"/>
</dbReference>
<dbReference type="SMART" id="SM01209">
    <property type="entry name" value="GARS_A"/>
    <property type="match status" value="1"/>
</dbReference>
<dbReference type="SMART" id="SM01210">
    <property type="entry name" value="GARS_C"/>
    <property type="match status" value="1"/>
</dbReference>
<dbReference type="SUPFAM" id="SSF56059">
    <property type="entry name" value="Glutathione synthetase ATP-binding domain-like"/>
    <property type="match status" value="1"/>
</dbReference>
<dbReference type="SUPFAM" id="SSF52440">
    <property type="entry name" value="PreATP-grasp domain"/>
    <property type="match status" value="1"/>
</dbReference>
<dbReference type="SUPFAM" id="SSF51246">
    <property type="entry name" value="Rudiment single hybrid motif"/>
    <property type="match status" value="1"/>
</dbReference>
<dbReference type="PROSITE" id="PS50975">
    <property type="entry name" value="ATP_GRASP"/>
    <property type="match status" value="1"/>
</dbReference>
<dbReference type="PROSITE" id="PS00184">
    <property type="entry name" value="GARS"/>
    <property type="match status" value="1"/>
</dbReference>
<sequence length="438" mass="48267">MRVLLVGGGGREHAIGEALVRGGAELYVVSKHKNPGLARLARGYGLAKETDIKKVLEYAEKFGVELAFIGPEAPLEKGIVDALEENGIPAVGPSREAAKLETDKAFARTFMERNEIPGRKVFRVFTDVSKMRSWVDDFGRPVVVKPIGLTGGKGVKVVGYQLRDNEEAKSYAEELIRRDGRVLIEERTNGVEFTFQVFTDGKRVLPMPLAQDYPHAYENDEGPITGGMGSYSCSNGLLPFVTREDYEKALETLKATVEAMRKEGTPYKGILYGQFMLSKGGPVLIEYNARFGDPEAINVLPLLETSLLEVAEGIVDGNLQGAEFEKKATVVKYLAPKGYPTNPVRGVKVEVNEKAVEEVGARLYYASIDENFTLLGSRAIAVVGIADSLEEAERIAKSVIPHVKGELFYRRDVGTRKSVEKRIELMKEFGKEFEPNPC</sequence>
<keyword id="KW-0067">ATP-binding</keyword>
<keyword id="KW-0436">Ligase</keyword>
<keyword id="KW-0460">Magnesium</keyword>
<keyword id="KW-0464">Manganese</keyword>
<keyword id="KW-0479">Metal-binding</keyword>
<keyword id="KW-0547">Nucleotide-binding</keyword>
<keyword id="KW-0658">Purine biosynthesis</keyword>
<keyword id="KW-1185">Reference proteome</keyword>
<feature type="chain" id="PRO_1000203243" description="Phosphoribosylamine--glycine ligase">
    <location>
        <begin position="1"/>
        <end position="438"/>
    </location>
</feature>
<feature type="domain" description="ATP-grasp" evidence="2">
    <location>
        <begin position="108"/>
        <end position="316"/>
    </location>
</feature>
<feature type="binding site" evidence="2">
    <location>
        <begin position="135"/>
        <end position="194"/>
    </location>
    <ligand>
        <name>ATP</name>
        <dbReference type="ChEBI" id="CHEBI:30616"/>
    </ligand>
</feature>
<feature type="binding site" evidence="2">
    <location>
        <position position="274"/>
    </location>
    <ligand>
        <name>Mg(2+)</name>
        <dbReference type="ChEBI" id="CHEBI:18420"/>
        <label>1</label>
    </ligand>
</feature>
<feature type="binding site" evidence="2">
    <location>
        <position position="274"/>
    </location>
    <ligand>
        <name>Mn(2+)</name>
        <dbReference type="ChEBI" id="CHEBI:29035"/>
        <label>1</label>
    </ligand>
</feature>
<feature type="binding site" evidence="2">
    <location>
        <position position="286"/>
    </location>
    <ligand>
        <name>Mg(2+)</name>
        <dbReference type="ChEBI" id="CHEBI:18420"/>
        <label>1</label>
    </ligand>
</feature>
<feature type="binding site" evidence="2">
    <location>
        <position position="286"/>
    </location>
    <ligand>
        <name>Mg(2+)</name>
        <dbReference type="ChEBI" id="CHEBI:18420"/>
        <label>2</label>
    </ligand>
</feature>
<feature type="binding site" evidence="2">
    <location>
        <position position="286"/>
    </location>
    <ligand>
        <name>Mn(2+)</name>
        <dbReference type="ChEBI" id="CHEBI:29035"/>
        <label>1</label>
    </ligand>
</feature>
<feature type="binding site" evidence="2">
    <location>
        <position position="286"/>
    </location>
    <ligand>
        <name>Mn(2+)</name>
        <dbReference type="ChEBI" id="CHEBI:29035"/>
        <label>2</label>
    </ligand>
</feature>
<feature type="binding site" evidence="2">
    <location>
        <position position="288"/>
    </location>
    <ligand>
        <name>Mg(2+)</name>
        <dbReference type="ChEBI" id="CHEBI:18420"/>
        <label>2</label>
    </ligand>
</feature>
<feature type="binding site" evidence="2">
    <location>
        <position position="288"/>
    </location>
    <ligand>
        <name>Mn(2+)</name>
        <dbReference type="ChEBI" id="CHEBI:29035"/>
        <label>2</label>
    </ligand>
</feature>
<protein>
    <recommendedName>
        <fullName evidence="2">Phosphoribosylamine--glycine ligase</fullName>
        <ecNumber evidence="2">6.3.4.13</ecNumber>
    </recommendedName>
    <alternativeName>
        <fullName evidence="2">GARS</fullName>
    </alternativeName>
    <alternativeName>
        <fullName evidence="2">Glycinamide ribonucleotide synthetase</fullName>
    </alternativeName>
    <alternativeName>
        <fullName evidence="2">Phosphoribosylglycinamide synthetase</fullName>
    </alternativeName>
</protein>
<evidence type="ECO:0000250" key="1"/>
<evidence type="ECO:0000255" key="2">
    <source>
        <dbReference type="HAMAP-Rule" id="MF_00138"/>
    </source>
</evidence>
<organism>
    <name type="scientific">Thermococcus gammatolerans (strain DSM 15229 / JCM 11827 / EJ3)</name>
    <dbReference type="NCBI Taxonomy" id="593117"/>
    <lineage>
        <taxon>Archaea</taxon>
        <taxon>Methanobacteriati</taxon>
        <taxon>Methanobacteriota</taxon>
        <taxon>Thermococci</taxon>
        <taxon>Thermococcales</taxon>
        <taxon>Thermococcaceae</taxon>
        <taxon>Thermococcus</taxon>
    </lineage>
</organism>
<comment type="catalytic activity">
    <reaction evidence="2">
        <text>5-phospho-beta-D-ribosylamine + glycine + ATP = N(1)-(5-phospho-beta-D-ribosyl)glycinamide + ADP + phosphate + H(+)</text>
        <dbReference type="Rhea" id="RHEA:17453"/>
        <dbReference type="ChEBI" id="CHEBI:15378"/>
        <dbReference type="ChEBI" id="CHEBI:30616"/>
        <dbReference type="ChEBI" id="CHEBI:43474"/>
        <dbReference type="ChEBI" id="CHEBI:57305"/>
        <dbReference type="ChEBI" id="CHEBI:58681"/>
        <dbReference type="ChEBI" id="CHEBI:143788"/>
        <dbReference type="ChEBI" id="CHEBI:456216"/>
        <dbReference type="EC" id="6.3.4.13"/>
    </reaction>
</comment>
<comment type="cofactor">
    <cofactor evidence="1">
        <name>Mg(2+)</name>
        <dbReference type="ChEBI" id="CHEBI:18420"/>
    </cofactor>
    <cofactor evidence="1">
        <name>Mn(2+)</name>
        <dbReference type="ChEBI" id="CHEBI:29035"/>
    </cofactor>
    <text evidence="1">Binds 2 magnesium or manganese ions per subunit.</text>
</comment>
<comment type="pathway">
    <text evidence="2">Purine metabolism; IMP biosynthesis via de novo pathway; N(1)-(5-phospho-D-ribosyl)glycinamide from 5-phospho-alpha-D-ribose 1-diphosphate: step 2/2.</text>
</comment>
<comment type="similarity">
    <text evidence="2">Belongs to the GARS family.</text>
</comment>
<accession>C5A4U0</accession>
<proteinExistence type="inferred from homology"/>
<name>PUR2_THEGJ</name>
<reference key="1">
    <citation type="journal article" date="2007" name="Genome Biol.">
        <title>Genome analysis and genome-wide proteomics of Thermococcus gammatolerans, the most radioresistant organism known amongst the Archaea.</title>
        <authorList>
            <person name="Zivanovic Y."/>
            <person name="Armengaud J."/>
            <person name="Lagorce A."/>
            <person name="Leplat C."/>
            <person name="Guerin P."/>
            <person name="Dutertre M."/>
            <person name="Anthouard V."/>
            <person name="Forterre P."/>
            <person name="Wincker P."/>
            <person name="Confalonieri F."/>
        </authorList>
    </citation>
    <scope>NUCLEOTIDE SEQUENCE [LARGE SCALE GENOMIC DNA]</scope>
    <source>
        <strain>DSM 15229 / JCM 11827 / EJ3</strain>
    </source>
</reference>
<gene>
    <name evidence="2" type="primary">purD</name>
    <name type="ordered locus">TGAM_0750</name>
</gene>